<name>SRP54_PYRIL</name>
<dbReference type="EC" id="3.6.5.4" evidence="1"/>
<dbReference type="EMBL" id="CP000504">
    <property type="protein sequence ID" value="ABL87775.1"/>
    <property type="molecule type" value="Genomic_DNA"/>
</dbReference>
<dbReference type="RefSeq" id="WP_011762351.1">
    <property type="nucleotide sequence ID" value="NC_008701.1"/>
</dbReference>
<dbReference type="SMR" id="A1RS43"/>
<dbReference type="STRING" id="384616.Pisl_0597"/>
<dbReference type="GeneID" id="4617621"/>
<dbReference type="KEGG" id="pis:Pisl_0597"/>
<dbReference type="eggNOG" id="arCOG01228">
    <property type="taxonomic scope" value="Archaea"/>
</dbReference>
<dbReference type="HOGENOM" id="CLU_009301_6_0_2"/>
<dbReference type="OrthoDB" id="52849at2157"/>
<dbReference type="Proteomes" id="UP000002595">
    <property type="component" value="Chromosome"/>
</dbReference>
<dbReference type="GO" id="GO:0048500">
    <property type="term" value="C:signal recognition particle"/>
    <property type="evidence" value="ECO:0007669"/>
    <property type="project" value="UniProtKB-UniRule"/>
</dbReference>
<dbReference type="GO" id="GO:0008312">
    <property type="term" value="F:7S RNA binding"/>
    <property type="evidence" value="ECO:0007669"/>
    <property type="project" value="UniProtKB-UniRule"/>
</dbReference>
<dbReference type="GO" id="GO:0016887">
    <property type="term" value="F:ATP hydrolysis activity"/>
    <property type="evidence" value="ECO:0007669"/>
    <property type="project" value="InterPro"/>
</dbReference>
<dbReference type="GO" id="GO:0005525">
    <property type="term" value="F:GTP binding"/>
    <property type="evidence" value="ECO:0007669"/>
    <property type="project" value="UniProtKB-UniRule"/>
</dbReference>
<dbReference type="GO" id="GO:0003924">
    <property type="term" value="F:GTPase activity"/>
    <property type="evidence" value="ECO:0007669"/>
    <property type="project" value="UniProtKB-UniRule"/>
</dbReference>
<dbReference type="GO" id="GO:0006614">
    <property type="term" value="P:SRP-dependent cotranslational protein targeting to membrane"/>
    <property type="evidence" value="ECO:0007669"/>
    <property type="project" value="InterPro"/>
</dbReference>
<dbReference type="CDD" id="cd17875">
    <property type="entry name" value="SRP54_G"/>
    <property type="match status" value="1"/>
</dbReference>
<dbReference type="FunFam" id="3.40.50.300:FF:000022">
    <property type="entry name" value="Signal recognition particle 54 kDa subunit"/>
    <property type="match status" value="1"/>
</dbReference>
<dbReference type="Gene3D" id="3.40.50.300">
    <property type="entry name" value="P-loop containing nucleotide triphosphate hydrolases"/>
    <property type="match status" value="1"/>
</dbReference>
<dbReference type="Gene3D" id="1.20.120.140">
    <property type="entry name" value="Signal recognition particle SRP54, nucleotide-binding domain"/>
    <property type="match status" value="1"/>
</dbReference>
<dbReference type="Gene3D" id="1.10.260.30">
    <property type="entry name" value="Signal recognition particle, SRP54 subunit, M-domain"/>
    <property type="match status" value="1"/>
</dbReference>
<dbReference type="HAMAP" id="MF_00306">
    <property type="entry name" value="SRP54"/>
    <property type="match status" value="1"/>
</dbReference>
<dbReference type="InterPro" id="IPR003593">
    <property type="entry name" value="AAA+_ATPase"/>
</dbReference>
<dbReference type="InterPro" id="IPR027417">
    <property type="entry name" value="P-loop_NTPase"/>
</dbReference>
<dbReference type="InterPro" id="IPR036891">
    <property type="entry name" value="Signal_recog_part_SRP54_M_sf"/>
</dbReference>
<dbReference type="InterPro" id="IPR013822">
    <property type="entry name" value="Signal_recog_particl_SRP54_hlx"/>
</dbReference>
<dbReference type="InterPro" id="IPR004125">
    <property type="entry name" value="Signal_recog_particle_SRP54_M"/>
</dbReference>
<dbReference type="InterPro" id="IPR036225">
    <property type="entry name" value="SRP/SRP_N"/>
</dbReference>
<dbReference type="InterPro" id="IPR022941">
    <property type="entry name" value="SRP54"/>
</dbReference>
<dbReference type="InterPro" id="IPR000897">
    <property type="entry name" value="SRP54_GTPase_dom"/>
</dbReference>
<dbReference type="InterPro" id="IPR042101">
    <property type="entry name" value="SRP54_N_sf"/>
</dbReference>
<dbReference type="PANTHER" id="PTHR11564">
    <property type="entry name" value="SIGNAL RECOGNITION PARTICLE 54K PROTEIN SRP54"/>
    <property type="match status" value="1"/>
</dbReference>
<dbReference type="PANTHER" id="PTHR11564:SF5">
    <property type="entry name" value="SIGNAL RECOGNITION PARTICLE SUBUNIT SRP54"/>
    <property type="match status" value="1"/>
</dbReference>
<dbReference type="Pfam" id="PF00448">
    <property type="entry name" value="SRP54"/>
    <property type="match status" value="1"/>
</dbReference>
<dbReference type="Pfam" id="PF02881">
    <property type="entry name" value="SRP54_N"/>
    <property type="match status" value="1"/>
</dbReference>
<dbReference type="Pfam" id="PF02978">
    <property type="entry name" value="SRP_SPB"/>
    <property type="match status" value="1"/>
</dbReference>
<dbReference type="SMART" id="SM00382">
    <property type="entry name" value="AAA"/>
    <property type="match status" value="1"/>
</dbReference>
<dbReference type="SMART" id="SM00962">
    <property type="entry name" value="SRP54"/>
    <property type="match status" value="1"/>
</dbReference>
<dbReference type="SMART" id="SM00963">
    <property type="entry name" value="SRP54_N"/>
    <property type="match status" value="1"/>
</dbReference>
<dbReference type="SUPFAM" id="SSF47364">
    <property type="entry name" value="Domain of the SRP/SRP receptor G-proteins"/>
    <property type="match status" value="1"/>
</dbReference>
<dbReference type="SUPFAM" id="SSF52540">
    <property type="entry name" value="P-loop containing nucleoside triphosphate hydrolases"/>
    <property type="match status" value="1"/>
</dbReference>
<dbReference type="SUPFAM" id="SSF47446">
    <property type="entry name" value="Signal peptide-binding domain"/>
    <property type="match status" value="1"/>
</dbReference>
<reference key="1">
    <citation type="submission" date="2006-12" db="EMBL/GenBank/DDBJ databases">
        <title>Complete sequence of Pyrobaculum islandicum DSM 4184.</title>
        <authorList>
            <person name="Copeland A."/>
            <person name="Lucas S."/>
            <person name="Lapidus A."/>
            <person name="Barry K."/>
            <person name="Detter J.C."/>
            <person name="Glavina del Rio T."/>
            <person name="Dalin E."/>
            <person name="Tice H."/>
            <person name="Pitluck S."/>
            <person name="Meincke L."/>
            <person name="Brettin T."/>
            <person name="Bruce D."/>
            <person name="Han C."/>
            <person name="Tapia R."/>
            <person name="Gilna P."/>
            <person name="Schmutz J."/>
            <person name="Larimer F."/>
            <person name="Land M."/>
            <person name="Hauser L."/>
            <person name="Kyrpides N."/>
            <person name="Mikhailova N."/>
            <person name="Cozen A.E."/>
            <person name="Fitz-Gibbon S.T."/>
            <person name="House C.H."/>
            <person name="Saltikov C."/>
            <person name="Lowe T."/>
            <person name="Richardson P."/>
        </authorList>
    </citation>
    <scope>NUCLEOTIDE SEQUENCE [LARGE SCALE GENOMIC DNA]</scope>
    <source>
        <strain>DSM 4184 / JCM 9189 / GEO3</strain>
    </source>
</reference>
<keyword id="KW-0963">Cytoplasm</keyword>
<keyword id="KW-0342">GTP-binding</keyword>
<keyword id="KW-0378">Hydrolase</keyword>
<keyword id="KW-0547">Nucleotide-binding</keyword>
<keyword id="KW-0687">Ribonucleoprotein</keyword>
<keyword id="KW-0694">RNA-binding</keyword>
<keyword id="KW-0733">Signal recognition particle</keyword>
<evidence type="ECO:0000255" key="1">
    <source>
        <dbReference type="HAMAP-Rule" id="MF_00306"/>
    </source>
</evidence>
<feature type="chain" id="PRO_0000300760" description="Signal recognition particle 54 kDa protein">
    <location>
        <begin position="1"/>
        <end position="433"/>
    </location>
</feature>
<feature type="binding site" evidence="1">
    <location>
        <begin position="106"/>
        <end position="113"/>
    </location>
    <ligand>
        <name>GTP</name>
        <dbReference type="ChEBI" id="CHEBI:37565"/>
    </ligand>
</feature>
<feature type="binding site" evidence="1">
    <location>
        <begin position="186"/>
        <end position="190"/>
    </location>
    <ligand>
        <name>GTP</name>
        <dbReference type="ChEBI" id="CHEBI:37565"/>
    </ligand>
</feature>
<feature type="binding site" evidence="1">
    <location>
        <begin position="244"/>
        <end position="247"/>
    </location>
    <ligand>
        <name>GTP</name>
        <dbReference type="ChEBI" id="CHEBI:37565"/>
    </ligand>
</feature>
<sequence>MKALGEVFSKLVEKIRGVSYIDEATLQELSREIQRALLKADVPLDMVKTFTENAVKRMREEKPPAGIPPREYVLYILYDELVKLLGGEQPAEFKPVKKPYLVLLLGVEGSGKTTTAAKLARYLVKRGYRVGLVETDTIRPAAFDQLKQLAEKIGVPFYGERDSKDAVEIARRGVQNFKNMDVVIIDTAGRHKNEEALLQEVKMIYEAVNPDEVILVIDATVGKLAAAQAEAFMKYLPIHSVIITKMDSTARGGGALAAVIKTGARVKFIGVGEDVDEFDLFNPRKFVARVLGMGDLDALVEKIKAVFEEEKVLQEIESGRLDLLTFKKQIEGLLKLGPLSKVLQLLPGGFAAKISEEQVELSQKNLKKWYAILSSMTIEELKNPDILNASRIRRIALGAGVTPKDVKEMLTVYENLKKMSKTLKRQLRMRIPK</sequence>
<protein>
    <recommendedName>
        <fullName evidence="1">Signal recognition particle 54 kDa protein</fullName>
        <shortName evidence="1">SRP54</shortName>
        <ecNumber evidence="1">3.6.5.4</ecNumber>
    </recommendedName>
</protein>
<gene>
    <name evidence="1" type="primary">srp54</name>
    <name type="ordered locus">Pisl_0597</name>
</gene>
<organism>
    <name type="scientific">Pyrobaculum islandicum (strain DSM 4184 / JCM 9189 / GEO3)</name>
    <dbReference type="NCBI Taxonomy" id="384616"/>
    <lineage>
        <taxon>Archaea</taxon>
        <taxon>Thermoproteota</taxon>
        <taxon>Thermoprotei</taxon>
        <taxon>Thermoproteales</taxon>
        <taxon>Thermoproteaceae</taxon>
        <taxon>Pyrobaculum</taxon>
    </lineage>
</organism>
<comment type="function">
    <text evidence="1">Involved in targeting and insertion of nascent membrane proteins into the cytoplasmic membrane. Binds to the hydrophobic signal sequence of the ribosome-nascent chain (RNC) as it emerges from the ribosomes. The SRP-RNC complex is then targeted to the cytoplasmic membrane where it interacts with the SRP receptor FtsY.</text>
</comment>
<comment type="catalytic activity">
    <reaction evidence="1">
        <text>GTP + H2O = GDP + phosphate + H(+)</text>
        <dbReference type="Rhea" id="RHEA:19669"/>
        <dbReference type="ChEBI" id="CHEBI:15377"/>
        <dbReference type="ChEBI" id="CHEBI:15378"/>
        <dbReference type="ChEBI" id="CHEBI:37565"/>
        <dbReference type="ChEBI" id="CHEBI:43474"/>
        <dbReference type="ChEBI" id="CHEBI:58189"/>
        <dbReference type="EC" id="3.6.5.4"/>
    </reaction>
</comment>
<comment type="subunit">
    <text evidence="1">Part of the signal recognition particle protein translocation system, which is composed of SRP and FtsY. Archaeal SRP consists of a 7S RNA molecule of 300 nucleotides and two protein subunits: SRP54 and SRP19.</text>
</comment>
<comment type="subcellular location">
    <subcellularLocation>
        <location evidence="1">Cytoplasm</location>
    </subcellularLocation>
    <text evidence="1">The SRP-RNC complex is targeted to the cytoplasmic membrane.</text>
</comment>
<comment type="domain">
    <text evidence="1">Composed of three domains: the N-terminal N domain, which is responsible for interactions with the ribosome, the central G domain, which binds GTP, and the C-terminal M domain, which binds the RNA and the signal sequence of the RNC.</text>
</comment>
<comment type="similarity">
    <text evidence="1">Belongs to the GTP-binding SRP family. SRP54 subfamily.</text>
</comment>
<proteinExistence type="inferred from homology"/>
<accession>A1RS43</accession>